<name>PNCB_BRUSU</name>
<keyword id="KW-0436">Ligase</keyword>
<keyword id="KW-0597">Phosphoprotein</keyword>
<keyword id="KW-0662">Pyridine nucleotide biosynthesis</keyword>
<evidence type="ECO:0000255" key="1">
    <source>
        <dbReference type="HAMAP-Rule" id="MF_00570"/>
    </source>
</evidence>
<protein>
    <recommendedName>
        <fullName evidence="1">Nicotinate phosphoribosyltransferase</fullName>
        <shortName evidence="1">NAPRTase</shortName>
        <ecNumber evidence="1">6.3.4.21</ecNumber>
    </recommendedName>
</protein>
<reference key="1">
    <citation type="journal article" date="2002" name="Proc. Natl. Acad. Sci. U.S.A.">
        <title>The Brucella suis genome reveals fundamental similarities between animal and plant pathogens and symbionts.</title>
        <authorList>
            <person name="Paulsen I.T."/>
            <person name="Seshadri R."/>
            <person name="Nelson K.E."/>
            <person name="Eisen J.A."/>
            <person name="Heidelberg J.F."/>
            <person name="Read T.D."/>
            <person name="Dodson R.J."/>
            <person name="Umayam L.A."/>
            <person name="Brinkac L.M."/>
            <person name="Beanan M.J."/>
            <person name="Daugherty S.C."/>
            <person name="DeBoy R.T."/>
            <person name="Durkin A.S."/>
            <person name="Kolonay J.F."/>
            <person name="Madupu R."/>
            <person name="Nelson W.C."/>
            <person name="Ayodeji B."/>
            <person name="Kraul M."/>
            <person name="Shetty J."/>
            <person name="Malek J.A."/>
            <person name="Van Aken S.E."/>
            <person name="Riedmuller S."/>
            <person name="Tettelin H."/>
            <person name="Gill S.R."/>
            <person name="White O."/>
            <person name="Salzberg S.L."/>
            <person name="Hoover D.L."/>
            <person name="Lindler L.E."/>
            <person name="Halling S.M."/>
            <person name="Boyle S.M."/>
            <person name="Fraser C.M."/>
        </authorList>
    </citation>
    <scope>NUCLEOTIDE SEQUENCE [LARGE SCALE GENOMIC DNA]</scope>
    <source>
        <strain>1330</strain>
    </source>
</reference>
<reference key="2">
    <citation type="journal article" date="2011" name="J. Bacteriol.">
        <title>Revised genome sequence of Brucella suis 1330.</title>
        <authorList>
            <person name="Tae H."/>
            <person name="Shallom S."/>
            <person name="Settlage R."/>
            <person name="Preston D."/>
            <person name="Adams L.G."/>
            <person name="Garner H.R."/>
        </authorList>
    </citation>
    <scope>NUCLEOTIDE SEQUENCE [LARGE SCALE GENOMIC DNA]</scope>
    <source>
        <strain>1330</strain>
    </source>
</reference>
<sequence length="434" mass="49909">MAKTDLARRVYNHTWKLDPIIRSLLDTDFYKLLMLQMIWGLYPRVDATFSLINRTSSVRLADEIDEGELRAQLDHARTLRFSKKEMIWLAGNTFYGRKQIFQPEFLAWLHDFQLPEYELRRKDGQYELHFHGPWTHTTMWEIPALAIINELRSRAAMKNLGPFSLDVLYARAKAKMWSKVERLRQLPDLKISDFGTRRRHSFLWQRWCVEALKEGIGSAFTGTSNVLLAMDTDLEALGTNAHELPMVLAALAKTDDELRSAPYRVLQDWNRYYGGNLLIVLPDAFGTAAFLRNAPDWVADWTGFRPDSAPPIEGGERIIEWWKSKGKDPREKLLIFSDALDVDTIEETYRHFEGRVRMGFGWGTNLTNDFAGCAPQSIDGLKAISLVCKVTDANGHPAVKLSDNPQKATGDPKEVARYLRFFGNEERVEQLVRV</sequence>
<feature type="chain" id="PRO_0000205822" description="Nicotinate phosphoribosyltransferase">
    <location>
        <begin position="1"/>
        <end position="434"/>
    </location>
</feature>
<feature type="modified residue" description="Phosphohistidine; by autocatalysis" evidence="1">
    <location>
        <position position="242"/>
    </location>
</feature>
<comment type="function">
    <text evidence="1">Catalyzes the synthesis of beta-nicotinate D-ribonucleotide from nicotinate and 5-phospho-D-ribose 1-phosphate at the expense of ATP.</text>
</comment>
<comment type="catalytic activity">
    <reaction evidence="1">
        <text>nicotinate + 5-phospho-alpha-D-ribose 1-diphosphate + ATP + H2O = nicotinate beta-D-ribonucleotide + ADP + phosphate + diphosphate</text>
        <dbReference type="Rhea" id="RHEA:36163"/>
        <dbReference type="ChEBI" id="CHEBI:15377"/>
        <dbReference type="ChEBI" id="CHEBI:30616"/>
        <dbReference type="ChEBI" id="CHEBI:32544"/>
        <dbReference type="ChEBI" id="CHEBI:33019"/>
        <dbReference type="ChEBI" id="CHEBI:43474"/>
        <dbReference type="ChEBI" id="CHEBI:57502"/>
        <dbReference type="ChEBI" id="CHEBI:58017"/>
        <dbReference type="ChEBI" id="CHEBI:456216"/>
        <dbReference type="EC" id="6.3.4.21"/>
    </reaction>
</comment>
<comment type="pathway">
    <text evidence="1">Cofactor biosynthesis; NAD(+) biosynthesis; nicotinate D-ribonucleotide from nicotinate: step 1/1.</text>
</comment>
<comment type="PTM">
    <text evidence="1">Transiently phosphorylated on a His residue during the reaction cycle. Phosphorylation strongly increases the affinity for substrates and increases the rate of nicotinate D-ribonucleotide production. Dephosphorylation regenerates the low-affinity form of the enzyme, leading to product release.</text>
</comment>
<comment type="similarity">
    <text evidence="1">Belongs to the NAPRTase family.</text>
</comment>
<accession>Q8G340</accession>
<accession>G0KB09</accession>
<proteinExistence type="inferred from homology"/>
<dbReference type="EC" id="6.3.4.21" evidence="1"/>
<dbReference type="EMBL" id="AE014291">
    <property type="protein sequence ID" value="AAN29068.1"/>
    <property type="molecule type" value="Genomic_DNA"/>
</dbReference>
<dbReference type="EMBL" id="CP002997">
    <property type="protein sequence ID" value="AEM17480.1"/>
    <property type="molecule type" value="Genomic_DNA"/>
</dbReference>
<dbReference type="RefSeq" id="WP_002965361.1">
    <property type="nucleotide sequence ID" value="NZ_KN046804.1"/>
</dbReference>
<dbReference type="SMR" id="Q8G340"/>
<dbReference type="GeneID" id="97534468"/>
<dbReference type="KEGG" id="bms:BR0112"/>
<dbReference type="KEGG" id="bsi:BS1330_I0112"/>
<dbReference type="PATRIC" id="fig|204722.21.peg.1581"/>
<dbReference type="HOGENOM" id="CLU_030991_1_0_5"/>
<dbReference type="UniPathway" id="UPA00253">
    <property type="reaction ID" value="UER00457"/>
</dbReference>
<dbReference type="Proteomes" id="UP000007104">
    <property type="component" value="Chromosome I"/>
</dbReference>
<dbReference type="GO" id="GO:0005829">
    <property type="term" value="C:cytosol"/>
    <property type="evidence" value="ECO:0007669"/>
    <property type="project" value="TreeGrafter"/>
</dbReference>
<dbReference type="GO" id="GO:0004516">
    <property type="term" value="F:nicotinate phosphoribosyltransferase activity"/>
    <property type="evidence" value="ECO:0007669"/>
    <property type="project" value="UniProtKB-UniRule"/>
</dbReference>
<dbReference type="GO" id="GO:0034355">
    <property type="term" value="P:NAD biosynthetic process via the salvage pathway"/>
    <property type="evidence" value="ECO:0007669"/>
    <property type="project" value="TreeGrafter"/>
</dbReference>
<dbReference type="Gene3D" id="3.20.140.10">
    <property type="entry name" value="nicotinate phosphoribosyltransferase"/>
    <property type="match status" value="1"/>
</dbReference>
<dbReference type="HAMAP" id="MF_00570">
    <property type="entry name" value="NAPRTase"/>
    <property type="match status" value="1"/>
</dbReference>
<dbReference type="InterPro" id="IPR041525">
    <property type="entry name" value="N/Namide_PRibTrfase"/>
</dbReference>
<dbReference type="InterPro" id="IPR040727">
    <property type="entry name" value="NAPRTase_N"/>
</dbReference>
<dbReference type="InterPro" id="IPR006406">
    <property type="entry name" value="Nic_PRibTrfase"/>
</dbReference>
<dbReference type="InterPro" id="IPR007229">
    <property type="entry name" value="Nic_PRibTrfase-Fam"/>
</dbReference>
<dbReference type="InterPro" id="IPR036068">
    <property type="entry name" value="Nicotinate_pribotase-like_C"/>
</dbReference>
<dbReference type="NCBIfam" id="TIGR01514">
    <property type="entry name" value="NAPRTase"/>
    <property type="match status" value="1"/>
</dbReference>
<dbReference type="NCBIfam" id="NF003704">
    <property type="entry name" value="PRK05321.1"/>
    <property type="match status" value="1"/>
</dbReference>
<dbReference type="PANTHER" id="PTHR11098">
    <property type="entry name" value="NICOTINATE PHOSPHORIBOSYLTRANSFERASE"/>
    <property type="match status" value="1"/>
</dbReference>
<dbReference type="PANTHER" id="PTHR11098:SF1">
    <property type="entry name" value="NICOTINATE PHOSPHORIBOSYLTRANSFERASE"/>
    <property type="match status" value="1"/>
</dbReference>
<dbReference type="Pfam" id="PF04095">
    <property type="entry name" value="NAPRTase"/>
    <property type="match status" value="1"/>
</dbReference>
<dbReference type="Pfam" id="PF17767">
    <property type="entry name" value="NAPRTase_N"/>
    <property type="match status" value="1"/>
</dbReference>
<dbReference type="PIRSF" id="PIRSF000484">
    <property type="entry name" value="NAPRT"/>
    <property type="match status" value="1"/>
</dbReference>
<dbReference type="SUPFAM" id="SSF51690">
    <property type="entry name" value="Nicotinate/Quinolinate PRTase C-terminal domain-like"/>
    <property type="match status" value="1"/>
</dbReference>
<dbReference type="SUPFAM" id="SSF54675">
    <property type="entry name" value="Nicotinate/Quinolinate PRTase N-terminal domain-like"/>
    <property type="match status" value="1"/>
</dbReference>
<gene>
    <name evidence="1" type="primary">pncB</name>
    <name type="ordered locus">BR0112</name>
    <name type="ordered locus">BS1330_I0112</name>
</gene>
<organism>
    <name type="scientific">Brucella suis biovar 1 (strain 1330)</name>
    <dbReference type="NCBI Taxonomy" id="204722"/>
    <lineage>
        <taxon>Bacteria</taxon>
        <taxon>Pseudomonadati</taxon>
        <taxon>Pseudomonadota</taxon>
        <taxon>Alphaproteobacteria</taxon>
        <taxon>Hyphomicrobiales</taxon>
        <taxon>Brucellaceae</taxon>
        <taxon>Brucella/Ochrobactrum group</taxon>
        <taxon>Brucella</taxon>
    </lineage>
</organism>